<comment type="function">
    <text evidence="2">Participates in iron-sulfur cluster formation (ISC) pathway for iron-sulfur (Fe-S) cluster biogenesis (PubMed:34032321). Can bind and transfer [4Fe-4S] clusters to target apo-proteins (PubMed:34032321).</text>
</comment>
<comment type="pathway">
    <text evidence="5">Cofactor biosynthesis; iron-sulfur cluster biosynthesis.</text>
</comment>
<comment type="subunit">
    <text evidence="2 3">Dimer (PubMed:34032321). Homotetramer (PubMed:34032321). Interacts with ABCB6 (PubMed:39348385).</text>
</comment>
<comment type="subcellular location">
    <subcellularLocation>
        <location evidence="2">Mitochondrion</location>
    </subcellularLocation>
</comment>
<comment type="similarity">
    <text evidence="5">Belongs to the HesB/IscA family.</text>
</comment>
<accession>O97297</accession>
<reference evidence="7" key="1">
    <citation type="journal article" date="1999" name="Nature">
        <title>The complete nucleotide sequence of chromosome 3 of Plasmodium falciparum.</title>
        <authorList>
            <person name="Bowman S."/>
            <person name="Lawson D."/>
            <person name="Basham D."/>
            <person name="Brown D."/>
            <person name="Chillingworth T."/>
            <person name="Churcher C.M."/>
            <person name="Craig A."/>
            <person name="Davies R.M."/>
            <person name="Devlin K."/>
            <person name="Feltwell T."/>
            <person name="Gentles S."/>
            <person name="Gwilliam R."/>
            <person name="Hamlin N."/>
            <person name="Harris D."/>
            <person name="Holroyd S."/>
            <person name="Hornsby T."/>
            <person name="Horrocks P."/>
            <person name="Jagels K."/>
            <person name="Jassal B."/>
            <person name="Kyes S."/>
            <person name="McLean J."/>
            <person name="Moule S."/>
            <person name="Mungall K.L."/>
            <person name="Murphy L."/>
            <person name="Oliver K."/>
            <person name="Quail M.A."/>
            <person name="Rajandream M.A."/>
            <person name="Rutter S."/>
            <person name="Skelton J."/>
            <person name="Squares R."/>
            <person name="Squares S."/>
            <person name="Sulston J.E."/>
            <person name="Whitehead S."/>
            <person name="Woodward J.R."/>
            <person name="Newbold C."/>
            <person name="Barrell B.G."/>
        </authorList>
    </citation>
    <scope>NUCLEOTIDE SEQUENCE [LARGE SCALE GENOMIC DNA]</scope>
    <source>
        <strain evidence="7">3D7</strain>
    </source>
</reference>
<reference evidence="7" key="2">
    <citation type="journal article" date="2002" name="Nature">
        <title>Genome sequence of the human malaria parasite Plasmodium falciparum.</title>
        <authorList>
            <person name="Gardner M.J."/>
            <person name="Hall N."/>
            <person name="Fung E."/>
            <person name="White O."/>
            <person name="Berriman M."/>
            <person name="Hyman R.W."/>
            <person name="Carlton J.M."/>
            <person name="Pain A."/>
            <person name="Nelson K.E."/>
            <person name="Bowman S."/>
            <person name="Paulsen I.T."/>
            <person name="James K.D."/>
            <person name="Eisen J.A."/>
            <person name="Rutherford K.M."/>
            <person name="Salzberg S.L."/>
            <person name="Craig A."/>
            <person name="Kyes S."/>
            <person name="Chan M.-S."/>
            <person name="Nene V."/>
            <person name="Shallom S.J."/>
            <person name="Suh B."/>
            <person name="Peterson J."/>
            <person name="Angiuoli S."/>
            <person name="Pertea M."/>
            <person name="Allen J."/>
            <person name="Selengut J."/>
            <person name="Haft D."/>
            <person name="Mather M.W."/>
            <person name="Vaidya A.B."/>
            <person name="Martin D.M.A."/>
            <person name="Fairlamb A.H."/>
            <person name="Fraunholz M.J."/>
            <person name="Roos D.S."/>
            <person name="Ralph S.A."/>
            <person name="McFadden G.I."/>
            <person name="Cummings L.M."/>
            <person name="Subramanian G.M."/>
            <person name="Mungall C."/>
            <person name="Venter J.C."/>
            <person name="Carucci D.J."/>
            <person name="Hoffman S.L."/>
            <person name="Newbold C."/>
            <person name="Davis R.W."/>
            <person name="Fraser C.M."/>
            <person name="Barrell B.G."/>
        </authorList>
    </citation>
    <scope>NUCLEOTIDE SEQUENCE [LARGE SCALE GENOMIC DNA]</scope>
    <source>
        <strain evidence="7">3D7</strain>
    </source>
</reference>
<reference evidence="7" key="3">
    <citation type="journal article" date="2002" name="Nature">
        <title>Sequence of Plasmodium falciparum chromosomes 1, 3-9 and 13.</title>
        <authorList>
            <person name="Hall N."/>
            <person name="Pain A."/>
            <person name="Berriman M."/>
            <person name="Churcher C.M."/>
            <person name="Harris B."/>
            <person name="Harris D."/>
            <person name="Mungall K.L."/>
            <person name="Bowman S."/>
            <person name="Atkin R."/>
            <person name="Baker S."/>
            <person name="Barron A."/>
            <person name="Brooks K."/>
            <person name="Buckee C.O."/>
            <person name="Burrows C."/>
            <person name="Cherevach I."/>
            <person name="Chillingworth C."/>
            <person name="Chillingworth T."/>
            <person name="Christodoulou Z."/>
            <person name="Clark L."/>
            <person name="Clark R."/>
            <person name="Corton C."/>
            <person name="Cronin A."/>
            <person name="Davies R.M."/>
            <person name="Davis P."/>
            <person name="Dear P."/>
            <person name="Dearden F."/>
            <person name="Doggett J."/>
            <person name="Feltwell T."/>
            <person name="Goble A."/>
            <person name="Goodhead I."/>
            <person name="Gwilliam R."/>
            <person name="Hamlin N."/>
            <person name="Hance Z."/>
            <person name="Harper D."/>
            <person name="Hauser H."/>
            <person name="Hornsby T."/>
            <person name="Holroyd S."/>
            <person name="Horrocks P."/>
            <person name="Humphray S."/>
            <person name="Jagels K."/>
            <person name="James K.D."/>
            <person name="Johnson D."/>
            <person name="Kerhornou A."/>
            <person name="Knights A."/>
            <person name="Konfortov B."/>
            <person name="Kyes S."/>
            <person name="Larke N."/>
            <person name="Lawson D."/>
            <person name="Lennard N."/>
            <person name="Line A."/>
            <person name="Maddison M."/>
            <person name="Mclean J."/>
            <person name="Mooney P."/>
            <person name="Moule S."/>
            <person name="Murphy L."/>
            <person name="Oliver K."/>
            <person name="Ormond D."/>
            <person name="Price C."/>
            <person name="Quail M.A."/>
            <person name="Rabbinowitsch E."/>
            <person name="Rajandream M.A."/>
            <person name="Rutter S."/>
            <person name="Rutherford K.M."/>
            <person name="Sanders M."/>
            <person name="Simmonds M."/>
            <person name="Seeger K."/>
            <person name="Sharp S."/>
            <person name="Smith R."/>
            <person name="Squares R."/>
            <person name="Squares S."/>
            <person name="Stevens K."/>
            <person name="Taylor K."/>
            <person name="Tivey A."/>
            <person name="Unwin L."/>
            <person name="Whitehead S."/>
            <person name="Woodward J.R."/>
            <person name="Sulston J.E."/>
            <person name="Craig A."/>
            <person name="Newbold C."/>
            <person name="Barrell B.G."/>
        </authorList>
    </citation>
    <scope>NUCLEOTIDE SEQUENCE [LARGE SCALE GENOMIC DNA]</scope>
    <source>
        <strain evidence="7">3D7</strain>
    </source>
</reference>
<reference evidence="5" key="4">
    <citation type="journal article" date="2021" name="Mol. Microbiol.">
        <title>[Fe-S] biogenesis and unusual assembly of the ISC scaffold complex in the Plasmodium falciparum mitochondrion.</title>
        <authorList>
            <person name="Sadik M."/>
            <person name="Afsar M."/>
            <person name="Ramachandran R."/>
            <person name="Habib S."/>
        </authorList>
    </citation>
    <scope>FUNCTION</scope>
    <scope>SUBUNIT</scope>
    <scope>SUBCELLULAR LOCATION</scope>
</reference>
<reference evidence="5" key="5">
    <citation type="journal article" date="2024" name="PLoS Pathog.">
        <title>ATM1, an essential conserved transporter in Apicomplexa, bridges mitochondrial and cytosolic [Fe-S] biogenesis.</title>
        <authorList>
            <person name="Shrivastava D."/>
            <person name="Abboud E."/>
            <person name="Ramchandra J.P."/>
            <person name="Jha A."/>
            <person name="Marq J.B."/>
            <person name="Chaurasia A."/>
            <person name="Mitra K."/>
            <person name="Sadik M."/>
            <person name="Siddiqi M.I."/>
            <person name="Soldati-Favre D."/>
            <person name="Kloehn J."/>
            <person name="Habib S."/>
        </authorList>
    </citation>
    <scope>INTERACTION WITH ABCB6</scope>
</reference>
<protein>
    <recommendedName>
        <fullName evidence="5">Iron-sulfur assembly protein IscA2</fullName>
        <shortName evidence="4">PfIscA2</shortName>
    </recommendedName>
</protein>
<gene>
    <name evidence="5" type="primary">IscA2</name>
    <name evidence="6" type="ORF">PF3D7_0322500</name>
</gene>
<feature type="chain" id="PRO_0000461959" description="Iron-sulfur assembly protein IscA2">
    <location>
        <begin position="1"/>
        <end position="404"/>
    </location>
</feature>
<feature type="coiled-coil region" evidence="1">
    <location>
        <begin position="244"/>
        <end position="289"/>
    </location>
</feature>
<keyword id="KW-0004">4Fe-4S</keyword>
<keyword id="KW-0175">Coiled coil</keyword>
<keyword id="KW-0408">Iron</keyword>
<keyword id="KW-0411">Iron-sulfur</keyword>
<keyword id="KW-0479">Metal-binding</keyword>
<keyword id="KW-0496">Mitochondrion</keyword>
<keyword id="KW-1185">Reference proteome</keyword>
<organism evidence="7">
    <name type="scientific">Plasmodium falciparum (isolate 3D7)</name>
    <dbReference type="NCBI Taxonomy" id="36329"/>
    <lineage>
        <taxon>Eukaryota</taxon>
        <taxon>Sar</taxon>
        <taxon>Alveolata</taxon>
        <taxon>Apicomplexa</taxon>
        <taxon>Aconoidasida</taxon>
        <taxon>Haemosporida</taxon>
        <taxon>Plasmodiidae</taxon>
        <taxon>Plasmodium</taxon>
        <taxon>Plasmodium (Laverania)</taxon>
    </lineage>
</organism>
<sequence>MFNNFLNMYMCTLAEKLCKFKKNNFNNIHRNNNFYRDNNFYRDNNFYRDNNFYRDNNFYRDNNLYTNNNLYRDNNFYRDNNFYRDNNFYRDNNLYTNNNLYRDNNLYTNNNLYRDNNFYNITLRKFHFIQTISNNNFNFEIIKKYGDVINKIMFIHTQKKNKQERFMFNNKKYIKRKEYILNDLNEFISIIPHPEINNEITNNSNQKKNKDNKQNVLSTNQQIITNYNLNHKENVTSNLNFNNKEEDEKKLDKLLKKRNIKKRDIVTITEEAKEELKKIISINKKENNNNYNNMNTICSDNHNDMNTICNDKNILKLFFITKGCNGLTHSFNFISKKDIHKEDEIIYDDQNNILLVIDKNCILYVINTTLDYYKDDLTEKFIFKNPNITSICPCGTSFHFSKKK</sequence>
<dbReference type="EMBL" id="AL844502">
    <property type="protein sequence ID" value="CAB39044.1"/>
    <property type="molecule type" value="Genomic_DNA"/>
</dbReference>
<dbReference type="RefSeq" id="XP_001351295.1">
    <property type="nucleotide sequence ID" value="XM_001351259.1"/>
</dbReference>
<dbReference type="SMR" id="O97297"/>
<dbReference type="STRING" id="36329.O97297"/>
<dbReference type="PaxDb" id="5833-PFC1005c"/>
<dbReference type="EnsemblProtists" id="CAB39044">
    <property type="protein sequence ID" value="CAB39044"/>
    <property type="gene ID" value="PF3D7_0322500"/>
</dbReference>
<dbReference type="GeneID" id="814539"/>
<dbReference type="KEGG" id="pfa:PF3D7_0322500"/>
<dbReference type="VEuPathDB" id="PlasmoDB:PF3D7_0322500"/>
<dbReference type="HOGENOM" id="CLU_682382_0_0_1"/>
<dbReference type="InParanoid" id="O97297"/>
<dbReference type="OMA" id="YTNNNFY"/>
<dbReference type="OrthoDB" id="155597at2759"/>
<dbReference type="UniPathway" id="UPA00266"/>
<dbReference type="Proteomes" id="UP000001450">
    <property type="component" value="Chromosome 3"/>
</dbReference>
<dbReference type="GO" id="GO:0005737">
    <property type="term" value="C:cytoplasm"/>
    <property type="evidence" value="ECO:0000318"/>
    <property type="project" value="GO_Central"/>
</dbReference>
<dbReference type="GO" id="GO:0005739">
    <property type="term" value="C:mitochondrion"/>
    <property type="evidence" value="ECO:0000318"/>
    <property type="project" value="GO_Central"/>
</dbReference>
<dbReference type="GO" id="GO:0051537">
    <property type="term" value="F:2 iron, 2 sulfur cluster binding"/>
    <property type="evidence" value="ECO:0000318"/>
    <property type="project" value="GO_Central"/>
</dbReference>
<dbReference type="GO" id="GO:0016226">
    <property type="term" value="P:iron-sulfur cluster assembly"/>
    <property type="evidence" value="ECO:0000318"/>
    <property type="project" value="GO_Central"/>
</dbReference>
<dbReference type="Gene3D" id="2.60.300.12">
    <property type="entry name" value="HesB-like domain"/>
    <property type="match status" value="1"/>
</dbReference>
<dbReference type="InterPro" id="IPR050322">
    <property type="entry name" value="Fe-S_cluster_asmbl/transfer"/>
</dbReference>
<dbReference type="InterPro" id="IPR000361">
    <property type="entry name" value="FeS_biogenesis"/>
</dbReference>
<dbReference type="InterPro" id="IPR016092">
    <property type="entry name" value="FeS_cluster_insertion"/>
</dbReference>
<dbReference type="InterPro" id="IPR017870">
    <property type="entry name" value="FeS_cluster_insertion_CS"/>
</dbReference>
<dbReference type="InterPro" id="IPR035903">
    <property type="entry name" value="HesB-like_dom_sf"/>
</dbReference>
<dbReference type="NCBIfam" id="TIGR00049">
    <property type="entry name" value="iron-sulfur cluster assembly accessory protein"/>
    <property type="match status" value="1"/>
</dbReference>
<dbReference type="PANTHER" id="PTHR10072:SF41">
    <property type="entry name" value="IRON-SULFUR CLUSTER ASSEMBLY 1 HOMOLOG, MITOCHONDRIAL"/>
    <property type="match status" value="1"/>
</dbReference>
<dbReference type="PANTHER" id="PTHR10072">
    <property type="entry name" value="IRON-SULFUR CLUSTER ASSEMBLY PROTEIN"/>
    <property type="match status" value="1"/>
</dbReference>
<dbReference type="Pfam" id="PF01521">
    <property type="entry name" value="Fe-S_biosyn"/>
    <property type="match status" value="1"/>
</dbReference>
<dbReference type="SUPFAM" id="SSF89360">
    <property type="entry name" value="HesB-like domain"/>
    <property type="match status" value="1"/>
</dbReference>
<dbReference type="PROSITE" id="PS01152">
    <property type="entry name" value="HESB"/>
    <property type="match status" value="1"/>
</dbReference>
<evidence type="ECO:0000255" key="1"/>
<evidence type="ECO:0000269" key="2">
    <source>
    </source>
</evidence>
<evidence type="ECO:0000269" key="3">
    <source>
    </source>
</evidence>
<evidence type="ECO:0000303" key="4">
    <source>
    </source>
</evidence>
<evidence type="ECO:0000305" key="5"/>
<evidence type="ECO:0000312" key="6">
    <source>
        <dbReference type="EMBL" id="CAB39044.1"/>
    </source>
</evidence>
<evidence type="ECO:0000312" key="7">
    <source>
        <dbReference type="Proteomes" id="UP000001450"/>
    </source>
</evidence>
<name>ISCA2_PLAF7</name>
<proteinExistence type="evidence at protein level"/>